<gene>
    <name type="ordered locus">NGR_a02450</name>
    <name type="ORF">y4mN</name>
</gene>
<sequence length="345" mass="37509">MRRSKYERPAHLIGNAERPRLTTSAMIASIAGADQPTRPAPFGHALSALAEKDDRVVGLSADLAKYTDLHVFRAAHPDRFYQMGMAEQLLMMSAAGMAREGLQPWVTTYAVFASRRAYDFICLAIAEEMLDVKVVCALPGLTTGYGPSHQATEDIAMFRGMPNLTIIDPCDASEIEQAVPAIAAHEGPVYMRLLRGNVPLVLEEYGYRFELGKAKLLRDGRDTLIISSGLMTMRALEAAEELRKNGIDAGVLHVPTIKPLDEATILAECARQGRLVVVAENHTVIGGLGEAVAATLMRSAVRPAAFRQIGLPDAFLEAGALPTLHDMYGISTTKIVAQIKEWLDE</sequence>
<evidence type="ECO:0000250" key="1"/>
<evidence type="ECO:0000305" key="2"/>
<proteinExistence type="uncertain"/>
<geneLocation type="plasmid">
    <name>sym pNGR234a</name>
</geneLocation>
<keyword id="KW-0614">Plasmid</keyword>
<keyword id="KW-1185">Reference proteome</keyword>
<keyword id="KW-0786">Thiamine pyrophosphate</keyword>
<comment type="cofactor">
    <cofactor evidence="1">
        <name>thiamine diphosphate</name>
        <dbReference type="ChEBI" id="CHEBI:58937"/>
    </cofactor>
    <text evidence="1">Binds 1 thiamine pyrophosphate per subunit.</text>
</comment>
<comment type="similarity">
    <text evidence="2">Belongs to the transketolase family.</text>
</comment>
<comment type="caution">
    <text evidence="2">Could be the product of a pseudogene. Corresponds to the C-terminal of members of this family.</text>
</comment>
<dbReference type="EMBL" id="U00090">
    <property type="protein sequence ID" value="AAB91777.1"/>
    <property type="molecule type" value="Genomic_DNA"/>
</dbReference>
<dbReference type="RefSeq" id="NP_443980.1">
    <property type="nucleotide sequence ID" value="NC_000914.2"/>
</dbReference>
<dbReference type="RefSeq" id="WP_010875270.1">
    <property type="nucleotide sequence ID" value="NC_000914.2"/>
</dbReference>
<dbReference type="SMR" id="P55573"/>
<dbReference type="KEGG" id="rhi:NGR_a02450"/>
<dbReference type="PATRIC" id="fig|394.7.peg.255"/>
<dbReference type="eggNOG" id="COG3958">
    <property type="taxonomic scope" value="Bacteria"/>
</dbReference>
<dbReference type="HOGENOM" id="CLU_009227_1_1_5"/>
<dbReference type="OrthoDB" id="8732661at2"/>
<dbReference type="Proteomes" id="UP000001054">
    <property type="component" value="Plasmid pNGR234a"/>
</dbReference>
<dbReference type="CDD" id="cd07033">
    <property type="entry name" value="TPP_PYR_DXS_TK_like"/>
    <property type="match status" value="1"/>
</dbReference>
<dbReference type="FunFam" id="3.40.50.970:FF:000129">
    <property type="entry name" value="Transketolase"/>
    <property type="match status" value="1"/>
</dbReference>
<dbReference type="Gene3D" id="3.40.50.920">
    <property type="match status" value="1"/>
</dbReference>
<dbReference type="Gene3D" id="3.40.50.970">
    <property type="match status" value="1"/>
</dbReference>
<dbReference type="InterPro" id="IPR051157">
    <property type="entry name" value="PDH/Transketolase"/>
</dbReference>
<dbReference type="InterPro" id="IPR029061">
    <property type="entry name" value="THDP-binding"/>
</dbReference>
<dbReference type="InterPro" id="IPR009014">
    <property type="entry name" value="Transketo_C/PFOR_II"/>
</dbReference>
<dbReference type="InterPro" id="IPR005475">
    <property type="entry name" value="Transketolase-like_Pyr-bd"/>
</dbReference>
<dbReference type="InterPro" id="IPR033248">
    <property type="entry name" value="Transketolase_C"/>
</dbReference>
<dbReference type="PANTHER" id="PTHR43825">
    <property type="entry name" value="PYRUVATE DEHYDROGENASE E1 COMPONENT"/>
    <property type="match status" value="1"/>
</dbReference>
<dbReference type="PANTHER" id="PTHR43825:SF1">
    <property type="entry name" value="TRANSKETOLASE-LIKE PYRIMIDINE-BINDING DOMAIN-CONTAINING PROTEIN"/>
    <property type="match status" value="1"/>
</dbReference>
<dbReference type="Pfam" id="PF02779">
    <property type="entry name" value="Transket_pyr"/>
    <property type="match status" value="1"/>
</dbReference>
<dbReference type="Pfam" id="PF02780">
    <property type="entry name" value="Transketolase_C"/>
    <property type="match status" value="1"/>
</dbReference>
<dbReference type="SMART" id="SM00861">
    <property type="entry name" value="Transket_pyr"/>
    <property type="match status" value="1"/>
</dbReference>
<dbReference type="SUPFAM" id="SSF52518">
    <property type="entry name" value="Thiamin diphosphate-binding fold (THDP-binding)"/>
    <property type="match status" value="1"/>
</dbReference>
<dbReference type="SUPFAM" id="SSF52922">
    <property type="entry name" value="TK C-terminal domain-like"/>
    <property type="match status" value="1"/>
</dbReference>
<name>Y4MN_SINFN</name>
<feature type="chain" id="PRO_0000191912" description="Putative uncharacterized transketolase family protein y4mN">
    <location>
        <begin position="1"/>
        <end position="345"/>
    </location>
</feature>
<reference key="1">
    <citation type="journal article" date="1997" name="Nature">
        <title>Molecular basis of symbiosis between Rhizobium and legumes.</title>
        <authorList>
            <person name="Freiberg C.A."/>
            <person name="Fellay R."/>
            <person name="Bairoch A."/>
            <person name="Broughton W.J."/>
            <person name="Rosenthal A."/>
            <person name="Perret X."/>
        </authorList>
    </citation>
    <scope>NUCLEOTIDE SEQUENCE [LARGE SCALE GENOMIC DNA]</scope>
    <source>
        <strain>NBRC 101917 / NGR234</strain>
    </source>
</reference>
<reference key="2">
    <citation type="journal article" date="2009" name="Appl. Environ. Microbiol.">
        <title>Rhizobium sp. strain NGR234 possesses a remarkable number of secretion systems.</title>
        <authorList>
            <person name="Schmeisser C."/>
            <person name="Liesegang H."/>
            <person name="Krysciak D."/>
            <person name="Bakkou N."/>
            <person name="Le Quere A."/>
            <person name="Wollherr A."/>
            <person name="Heinemeyer I."/>
            <person name="Morgenstern B."/>
            <person name="Pommerening-Roeser A."/>
            <person name="Flores M."/>
            <person name="Palacios R."/>
            <person name="Brenner S."/>
            <person name="Gottschalk G."/>
            <person name="Schmitz R.A."/>
            <person name="Broughton W.J."/>
            <person name="Perret X."/>
            <person name="Strittmatter A.W."/>
            <person name="Streit W.R."/>
        </authorList>
    </citation>
    <scope>NUCLEOTIDE SEQUENCE [LARGE SCALE GENOMIC DNA]</scope>
    <source>
        <strain>NBRC 101917 / NGR234</strain>
    </source>
</reference>
<organism>
    <name type="scientific">Sinorhizobium fredii (strain NBRC 101917 / NGR234)</name>
    <dbReference type="NCBI Taxonomy" id="394"/>
    <lineage>
        <taxon>Bacteria</taxon>
        <taxon>Pseudomonadati</taxon>
        <taxon>Pseudomonadota</taxon>
        <taxon>Alphaproteobacteria</taxon>
        <taxon>Hyphomicrobiales</taxon>
        <taxon>Rhizobiaceae</taxon>
        <taxon>Sinorhizobium/Ensifer group</taxon>
        <taxon>Sinorhizobium</taxon>
    </lineage>
</organism>
<accession>P55573</accession>
<protein>
    <recommendedName>
        <fullName>Putative uncharacterized transketolase family protein y4mN</fullName>
    </recommendedName>
</protein>